<accession>C4ZQD5</accession>
<evidence type="ECO:0000255" key="1">
    <source>
        <dbReference type="HAMAP-Rule" id="MF_00833"/>
    </source>
</evidence>
<sequence>MNIVDQQTFRDAMSCMGAAVNIITTDGPAGRAGFTASAVCSVTDTPPTLLVCLNRGASVWPAFNENRTLCVNTLSAGQEPLSNLFGGKTPMEHRFAAARWQTGVTGCPQLEEALVSFDCRISQVVSVGTHDILFCAIEAIHRHTTPYGLVWFDRSYHALMRPAC</sequence>
<feature type="chain" id="PRO_0000403004" description="FMN reductase (NADH) RutF">
    <location>
        <begin position="1"/>
        <end position="164"/>
    </location>
</feature>
<reference key="1">
    <citation type="journal article" date="2009" name="J. Bacteriol.">
        <title>Genomic sequencing reveals regulatory mutations and recombinational events in the widely used MC4100 lineage of Escherichia coli K-12.</title>
        <authorList>
            <person name="Ferenci T."/>
            <person name="Zhou Z."/>
            <person name="Betteridge T."/>
            <person name="Ren Y."/>
            <person name="Liu Y."/>
            <person name="Feng L."/>
            <person name="Reeves P.R."/>
            <person name="Wang L."/>
        </authorList>
    </citation>
    <scope>NUCLEOTIDE SEQUENCE [LARGE SCALE GENOMIC DNA]</scope>
    <source>
        <strain>K12 / MC4100 / BW2952</strain>
    </source>
</reference>
<organism>
    <name type="scientific">Escherichia coli (strain K12 / MC4100 / BW2952)</name>
    <dbReference type="NCBI Taxonomy" id="595496"/>
    <lineage>
        <taxon>Bacteria</taxon>
        <taxon>Pseudomonadati</taxon>
        <taxon>Pseudomonadota</taxon>
        <taxon>Gammaproteobacteria</taxon>
        <taxon>Enterobacterales</taxon>
        <taxon>Enterobacteriaceae</taxon>
        <taxon>Escherichia</taxon>
    </lineage>
</organism>
<gene>
    <name evidence="1" type="primary">rutF</name>
    <name type="ordered locus">BWG_0861</name>
</gene>
<comment type="function">
    <text evidence="1">Catalyzes the reduction of FMN to FMNH2 which is used to reduce pyrimidine by RutA via the Rut pathway.</text>
</comment>
<comment type="catalytic activity">
    <reaction evidence="1">
        <text>FMNH2 + NAD(+) = FMN + NADH + 2 H(+)</text>
        <dbReference type="Rhea" id="RHEA:21620"/>
        <dbReference type="ChEBI" id="CHEBI:15378"/>
        <dbReference type="ChEBI" id="CHEBI:57540"/>
        <dbReference type="ChEBI" id="CHEBI:57618"/>
        <dbReference type="ChEBI" id="CHEBI:57945"/>
        <dbReference type="ChEBI" id="CHEBI:58210"/>
        <dbReference type="EC" id="1.5.1.42"/>
    </reaction>
</comment>
<comment type="induction">
    <text evidence="1">Up-regulated by the nitrogen regulatory protein C (NtrC also called GlnG) and repressed by RutR.</text>
</comment>
<comment type="similarity">
    <text evidence="1">Belongs to the non-flavoprotein flavin reductase family. RutF subfamily.</text>
</comment>
<proteinExistence type="inferred from homology"/>
<name>RUTF_ECOBW</name>
<protein>
    <recommendedName>
        <fullName evidence="1">FMN reductase (NADH) RutF</fullName>
        <ecNumber evidence="1">1.5.1.42</ecNumber>
    </recommendedName>
    <alternativeName>
        <fullName evidence="1">FMN reductase</fullName>
    </alternativeName>
    <alternativeName>
        <fullName evidence="1">NADH-flavin reductase RutF</fullName>
    </alternativeName>
    <alternativeName>
        <fullName evidence="1">NADH:flavin oxidoreductase</fullName>
    </alternativeName>
</protein>
<keyword id="KW-0285">Flavoprotein</keyword>
<keyword id="KW-0288">FMN</keyword>
<keyword id="KW-0520">NAD</keyword>
<keyword id="KW-0560">Oxidoreductase</keyword>
<dbReference type="EC" id="1.5.1.42" evidence="1"/>
<dbReference type="EMBL" id="CP001396">
    <property type="protein sequence ID" value="ACR64761.1"/>
    <property type="molecule type" value="Genomic_DNA"/>
</dbReference>
<dbReference type="RefSeq" id="WP_001028083.1">
    <property type="nucleotide sequence ID" value="NC_012759.1"/>
</dbReference>
<dbReference type="SMR" id="C4ZQD5"/>
<dbReference type="KEGG" id="ebw:BWG_0861"/>
<dbReference type="HOGENOM" id="CLU_059021_2_2_6"/>
<dbReference type="GO" id="GO:0010181">
    <property type="term" value="F:FMN binding"/>
    <property type="evidence" value="ECO:0007669"/>
    <property type="project" value="InterPro"/>
</dbReference>
<dbReference type="GO" id="GO:0052874">
    <property type="term" value="F:FMN reductase (NADH) activity"/>
    <property type="evidence" value="ECO:0007669"/>
    <property type="project" value="UniProtKB-EC"/>
</dbReference>
<dbReference type="GO" id="GO:0008752">
    <property type="term" value="F:FMN reductase [NAD(P)H] activity"/>
    <property type="evidence" value="ECO:0007669"/>
    <property type="project" value="InterPro"/>
</dbReference>
<dbReference type="GO" id="GO:0042602">
    <property type="term" value="F:riboflavin reductase (NADPH) activity"/>
    <property type="evidence" value="ECO:0007669"/>
    <property type="project" value="UniProtKB-UniRule"/>
</dbReference>
<dbReference type="GO" id="GO:0019740">
    <property type="term" value="P:nitrogen utilization"/>
    <property type="evidence" value="ECO:0007669"/>
    <property type="project" value="UniProtKB-UniRule"/>
</dbReference>
<dbReference type="GO" id="GO:0006212">
    <property type="term" value="P:uracil catabolic process"/>
    <property type="evidence" value="ECO:0007669"/>
    <property type="project" value="UniProtKB-UniRule"/>
</dbReference>
<dbReference type="FunFam" id="2.30.110.10:FF:000002">
    <property type="entry name" value="FMN reductase (NADH) RutF"/>
    <property type="match status" value="1"/>
</dbReference>
<dbReference type="Gene3D" id="2.30.110.10">
    <property type="entry name" value="Electron Transport, Fmn-binding Protein, Chain A"/>
    <property type="match status" value="1"/>
</dbReference>
<dbReference type="HAMAP" id="MF_00833">
    <property type="entry name" value="RutF"/>
    <property type="match status" value="1"/>
</dbReference>
<dbReference type="InterPro" id="IPR002563">
    <property type="entry name" value="Flavin_Rdtase-like_dom"/>
</dbReference>
<dbReference type="InterPro" id="IPR050268">
    <property type="entry name" value="NADH-dep_flavin_reductase"/>
</dbReference>
<dbReference type="InterPro" id="IPR019917">
    <property type="entry name" value="RutF"/>
</dbReference>
<dbReference type="InterPro" id="IPR012349">
    <property type="entry name" value="Split_barrel_FMN-bd"/>
</dbReference>
<dbReference type="NCBIfam" id="TIGR03615">
    <property type="entry name" value="RutF"/>
    <property type="match status" value="1"/>
</dbReference>
<dbReference type="PANTHER" id="PTHR30466">
    <property type="entry name" value="FLAVIN REDUCTASE"/>
    <property type="match status" value="1"/>
</dbReference>
<dbReference type="PANTHER" id="PTHR30466:SF1">
    <property type="entry name" value="FMN REDUCTASE (NADH) RUTF"/>
    <property type="match status" value="1"/>
</dbReference>
<dbReference type="Pfam" id="PF01613">
    <property type="entry name" value="Flavin_Reduct"/>
    <property type="match status" value="1"/>
</dbReference>
<dbReference type="SMART" id="SM00903">
    <property type="entry name" value="Flavin_Reduct"/>
    <property type="match status" value="1"/>
</dbReference>
<dbReference type="SUPFAM" id="SSF50475">
    <property type="entry name" value="FMN-binding split barrel"/>
    <property type="match status" value="1"/>
</dbReference>